<keyword id="KW-0997">Cell inner membrane</keyword>
<keyword id="KW-1003">Cell membrane</keyword>
<keyword id="KW-0406">Ion transport</keyword>
<keyword id="KW-0472">Membrane</keyword>
<keyword id="KW-0520">NAD</keyword>
<keyword id="KW-1185">Reference proteome</keyword>
<keyword id="KW-0915">Sodium</keyword>
<keyword id="KW-0739">Sodium transport</keyword>
<keyword id="KW-1278">Translocase</keyword>
<keyword id="KW-0812">Transmembrane</keyword>
<keyword id="KW-1133">Transmembrane helix</keyword>
<keyword id="KW-0813">Transport</keyword>
<keyword id="KW-0830">Ubiquinone</keyword>
<name>NQRE_NEIG1</name>
<proteinExistence type="inferred from homology"/>
<organism>
    <name type="scientific">Neisseria gonorrhoeae (strain ATCC 700825 / FA 1090)</name>
    <dbReference type="NCBI Taxonomy" id="242231"/>
    <lineage>
        <taxon>Bacteria</taxon>
        <taxon>Pseudomonadati</taxon>
        <taxon>Pseudomonadota</taxon>
        <taxon>Betaproteobacteria</taxon>
        <taxon>Neisseriales</taxon>
        <taxon>Neisseriaceae</taxon>
        <taxon>Neisseria</taxon>
    </lineage>
</organism>
<evidence type="ECO:0000255" key="1">
    <source>
        <dbReference type="HAMAP-Rule" id="MF_00429"/>
    </source>
</evidence>
<gene>
    <name evidence="1" type="primary">nqrE</name>
    <name type="ordered locus">NGO_1417</name>
</gene>
<accession>Q5F6X6</accession>
<reference key="1">
    <citation type="submission" date="2003-03" db="EMBL/GenBank/DDBJ databases">
        <title>The complete genome sequence of Neisseria gonorrhoeae.</title>
        <authorList>
            <person name="Lewis L.A."/>
            <person name="Gillaspy A.F."/>
            <person name="McLaughlin R.E."/>
            <person name="Gipson M."/>
            <person name="Ducey T.F."/>
            <person name="Ownbey T."/>
            <person name="Hartman K."/>
            <person name="Nydick C."/>
            <person name="Carson M.B."/>
            <person name="Vaughn J."/>
            <person name="Thomson C."/>
            <person name="Song L."/>
            <person name="Lin S."/>
            <person name="Yuan X."/>
            <person name="Najar F."/>
            <person name="Zhan M."/>
            <person name="Ren Q."/>
            <person name="Zhu H."/>
            <person name="Qi S."/>
            <person name="Kenton S.M."/>
            <person name="Lai H."/>
            <person name="White J.D."/>
            <person name="Clifton S."/>
            <person name="Roe B.A."/>
            <person name="Dyer D.W."/>
        </authorList>
    </citation>
    <scope>NUCLEOTIDE SEQUENCE [LARGE SCALE GENOMIC DNA]</scope>
    <source>
        <strain>ATCC 700825 / FA 1090</strain>
    </source>
</reference>
<sequence length="197" mass="21180">MEHYLSLFIKSVFIENMALSFFLGMCTFLAVSKKVSTAFGLGVAVIFVLGLSVPANQLVYSLLKDGAIVEGVDLTFLKFITFIGVIAALVQILEMFLDKFVPALYNALGIYLPLITVNCAIFGAVSFMAQREYDFGESVVYGFGAGLGWMLAIVALAGITEKMKYSDAPKGLKGLGITFIAAGLMAMAFMSFSGIQL</sequence>
<protein>
    <recommendedName>
        <fullName evidence="1">Na(+)-translocating NADH-quinone reductase subunit E</fullName>
        <shortName evidence="1">Na(+)-NQR subunit E</shortName>
        <shortName evidence="1">Na(+)-translocating NQR subunit E</shortName>
        <ecNumber evidence="1">7.2.1.1</ecNumber>
    </recommendedName>
    <alternativeName>
        <fullName evidence="1">NQR complex subunit E</fullName>
    </alternativeName>
    <alternativeName>
        <fullName evidence="1">NQR-1 subunit E</fullName>
    </alternativeName>
</protein>
<comment type="function">
    <text evidence="1">NQR complex catalyzes the reduction of ubiquinone-1 to ubiquinol by two successive reactions, coupled with the transport of Na(+) ions from the cytoplasm to the periplasm. NqrA to NqrE are probably involved in the second step, the conversion of ubisemiquinone to ubiquinol.</text>
</comment>
<comment type="catalytic activity">
    <reaction evidence="1">
        <text>a ubiquinone + n Na(+)(in) + NADH + H(+) = a ubiquinol + n Na(+)(out) + NAD(+)</text>
        <dbReference type="Rhea" id="RHEA:47748"/>
        <dbReference type="Rhea" id="RHEA-COMP:9565"/>
        <dbReference type="Rhea" id="RHEA-COMP:9566"/>
        <dbReference type="ChEBI" id="CHEBI:15378"/>
        <dbReference type="ChEBI" id="CHEBI:16389"/>
        <dbReference type="ChEBI" id="CHEBI:17976"/>
        <dbReference type="ChEBI" id="CHEBI:29101"/>
        <dbReference type="ChEBI" id="CHEBI:57540"/>
        <dbReference type="ChEBI" id="CHEBI:57945"/>
        <dbReference type="EC" id="7.2.1.1"/>
    </reaction>
</comment>
<comment type="subunit">
    <text evidence="1">Composed of six subunits; NqrA, NqrB, NqrC, NqrD, NqrE and NqrF.</text>
</comment>
<comment type="subcellular location">
    <subcellularLocation>
        <location evidence="1">Cell inner membrane</location>
        <topology evidence="1">Multi-pass membrane protein</topology>
    </subcellularLocation>
</comment>
<comment type="similarity">
    <text evidence="1">Belongs to the NqrDE/RnfAE family.</text>
</comment>
<dbReference type="EC" id="7.2.1.1" evidence="1"/>
<dbReference type="EMBL" id="AE004969">
    <property type="protein sequence ID" value="AAW90061.1"/>
    <property type="molecule type" value="Genomic_DNA"/>
</dbReference>
<dbReference type="RefSeq" id="WP_003689273.1">
    <property type="nucleotide sequence ID" value="NC_002946.2"/>
</dbReference>
<dbReference type="RefSeq" id="YP_208473.1">
    <property type="nucleotide sequence ID" value="NC_002946.2"/>
</dbReference>
<dbReference type="SMR" id="Q5F6X6"/>
<dbReference type="STRING" id="242231.NGO_1417"/>
<dbReference type="GeneID" id="66753630"/>
<dbReference type="KEGG" id="ngo:NGO_1417"/>
<dbReference type="PATRIC" id="fig|242231.10.peg.1669"/>
<dbReference type="HOGENOM" id="CLU_095255_0_0_4"/>
<dbReference type="Proteomes" id="UP000000535">
    <property type="component" value="Chromosome"/>
</dbReference>
<dbReference type="GO" id="GO:0009276">
    <property type="term" value="C:Gram-negative-bacterium-type cell wall"/>
    <property type="evidence" value="ECO:0007669"/>
    <property type="project" value="InterPro"/>
</dbReference>
<dbReference type="GO" id="GO:0005886">
    <property type="term" value="C:plasma membrane"/>
    <property type="evidence" value="ECO:0007669"/>
    <property type="project" value="UniProtKB-SubCell"/>
</dbReference>
<dbReference type="GO" id="GO:0016655">
    <property type="term" value="F:oxidoreductase activity, acting on NAD(P)H, quinone or similar compound as acceptor"/>
    <property type="evidence" value="ECO:0007669"/>
    <property type="project" value="UniProtKB-UniRule"/>
</dbReference>
<dbReference type="GO" id="GO:0022904">
    <property type="term" value="P:respiratory electron transport chain"/>
    <property type="evidence" value="ECO:0007669"/>
    <property type="project" value="InterPro"/>
</dbReference>
<dbReference type="GO" id="GO:0006814">
    <property type="term" value="P:sodium ion transport"/>
    <property type="evidence" value="ECO:0007669"/>
    <property type="project" value="UniProtKB-UniRule"/>
</dbReference>
<dbReference type="HAMAP" id="MF_00429">
    <property type="entry name" value="NqrE"/>
    <property type="match status" value="1"/>
</dbReference>
<dbReference type="InterPro" id="IPR003667">
    <property type="entry name" value="NqrDE/RnfAE"/>
</dbReference>
<dbReference type="InterPro" id="IPR050133">
    <property type="entry name" value="NqrDE/RnfAE_oxidrdctase"/>
</dbReference>
<dbReference type="InterPro" id="IPR010967">
    <property type="entry name" value="NqrE"/>
</dbReference>
<dbReference type="NCBIfam" id="TIGR01940">
    <property type="entry name" value="nqrE"/>
    <property type="match status" value="1"/>
</dbReference>
<dbReference type="PANTHER" id="PTHR30335">
    <property type="entry name" value="INTEGRAL MEMBRANE PROTEIN OF SOXR-REDUCING COMPLEX"/>
    <property type="match status" value="1"/>
</dbReference>
<dbReference type="PANTHER" id="PTHR30335:SF1">
    <property type="entry name" value="NA(+)-TRANSLOCATING NADH-QUINONE REDUCTASE SUBUNIT E"/>
    <property type="match status" value="1"/>
</dbReference>
<dbReference type="Pfam" id="PF02508">
    <property type="entry name" value="Rnf-Nqr"/>
    <property type="match status" value="1"/>
</dbReference>
<dbReference type="PIRSF" id="PIRSF006102">
    <property type="entry name" value="NQR_DE"/>
    <property type="match status" value="1"/>
</dbReference>
<feature type="chain" id="PRO_1000060201" description="Na(+)-translocating NADH-quinone reductase subunit E">
    <location>
        <begin position="1"/>
        <end position="197"/>
    </location>
</feature>
<feature type="transmembrane region" description="Helical" evidence="1">
    <location>
        <begin position="11"/>
        <end position="31"/>
    </location>
</feature>
<feature type="transmembrane region" description="Helical" evidence="1">
    <location>
        <begin position="35"/>
        <end position="55"/>
    </location>
</feature>
<feature type="transmembrane region" description="Helical" evidence="1">
    <location>
        <begin position="76"/>
        <end position="96"/>
    </location>
</feature>
<feature type="transmembrane region" description="Helical" evidence="1">
    <location>
        <begin position="108"/>
        <end position="128"/>
    </location>
</feature>
<feature type="transmembrane region" description="Helical" evidence="1">
    <location>
        <begin position="139"/>
        <end position="159"/>
    </location>
</feature>
<feature type="transmembrane region" description="Helical" evidence="1">
    <location>
        <begin position="175"/>
        <end position="195"/>
    </location>
</feature>